<accession>Q6FZN9</accession>
<feature type="chain" id="PRO_0000119513" description="Glutamate--tRNA ligase 2">
    <location>
        <begin position="1"/>
        <end position="475"/>
    </location>
</feature>
<feature type="short sequence motif" description="'HIGH' region" evidence="1">
    <location>
        <begin position="9"/>
        <end position="19"/>
    </location>
</feature>
<feature type="short sequence motif" description="'KMSKS' region" evidence="1">
    <location>
        <begin position="238"/>
        <end position="242"/>
    </location>
</feature>
<feature type="binding site" evidence="1">
    <location>
        <position position="241"/>
    </location>
    <ligand>
        <name>ATP</name>
        <dbReference type="ChEBI" id="CHEBI:30616"/>
    </ligand>
</feature>
<reference key="1">
    <citation type="journal article" date="2004" name="Proc. Natl. Acad. Sci. U.S.A.">
        <title>The louse-borne human pathogen Bartonella quintana is a genomic derivative of the zoonotic agent Bartonella henselae.</title>
        <authorList>
            <person name="Alsmark U.C.M."/>
            <person name="Frank A.C."/>
            <person name="Karlberg E.O."/>
            <person name="Legault B.-A."/>
            <person name="Ardell D.H."/>
            <person name="Canbaeck B."/>
            <person name="Eriksson A.-S."/>
            <person name="Naeslund A.K."/>
            <person name="Handley S.A."/>
            <person name="Huvet M."/>
            <person name="La Scola B."/>
            <person name="Holmberg M."/>
            <person name="Andersson S.G.E."/>
        </authorList>
    </citation>
    <scope>NUCLEOTIDE SEQUENCE [LARGE SCALE GENOMIC DNA]</scope>
    <source>
        <strain>Toulouse</strain>
    </source>
</reference>
<name>SYE2_BARQU</name>
<evidence type="ECO:0000255" key="1">
    <source>
        <dbReference type="HAMAP-Rule" id="MF_00022"/>
    </source>
</evidence>
<sequence length="475" mass="53619">MSVITRFAPSPTGFLHIGSARTALFNWLYAKHTGGKMLLRIEDTDRERSTETALKAIIDGLHWMGLSYDGDPISQFERAERHRQVAKQLVKDGKAYYCYASPEELAEMRENARAEGRPPRYDGRWRDRDISEAPKGVKPVIRIKAPQDGETVLHDRVQGDVRFPNKDLDDFIILRSDGSPTYMHAVVVDDHDMGVTHIIRGDDHLTNAARQTIIFNALGWDIPVMAHIPLIHGENGAKLSKRHGALGVDAYRIMGYLPAALRNYLVRLGWSHGDDELMSIESMIFWFDIDDINKSAARFDLKKLDAINGHYIRMNNDQDLFDAVLNILPEIEGGLEIIERLDEQRRAQFLAAIPNLKERSKTLRELIDNASFIFTKRPLLLDEKAQILLDKNGQAILNGLYLALKACLSWDAKTLDETLRVYAQKQDLKFGDVAQPLRAALTGRVTSPGVFDVLVLLGRDEALNRITDQLVTTAC</sequence>
<comment type="function">
    <text evidence="1">Catalyzes the attachment of glutamate to tRNA(Glu) in a two-step reaction: glutamate is first activated by ATP to form Glu-AMP and then transferred to the acceptor end of tRNA(Glu).</text>
</comment>
<comment type="catalytic activity">
    <reaction evidence="1">
        <text>tRNA(Glu) + L-glutamate + ATP = L-glutamyl-tRNA(Glu) + AMP + diphosphate</text>
        <dbReference type="Rhea" id="RHEA:23540"/>
        <dbReference type="Rhea" id="RHEA-COMP:9663"/>
        <dbReference type="Rhea" id="RHEA-COMP:9680"/>
        <dbReference type="ChEBI" id="CHEBI:29985"/>
        <dbReference type="ChEBI" id="CHEBI:30616"/>
        <dbReference type="ChEBI" id="CHEBI:33019"/>
        <dbReference type="ChEBI" id="CHEBI:78442"/>
        <dbReference type="ChEBI" id="CHEBI:78520"/>
        <dbReference type="ChEBI" id="CHEBI:456215"/>
        <dbReference type="EC" id="6.1.1.17"/>
    </reaction>
</comment>
<comment type="subunit">
    <text evidence="1">Monomer.</text>
</comment>
<comment type="subcellular location">
    <subcellularLocation>
        <location evidence="1">Cytoplasm</location>
    </subcellularLocation>
</comment>
<comment type="similarity">
    <text evidence="1">Belongs to the class-I aminoacyl-tRNA synthetase family. Glutamate--tRNA ligase type 1 subfamily.</text>
</comment>
<dbReference type="EC" id="6.1.1.17" evidence="1"/>
<dbReference type="EMBL" id="BX897700">
    <property type="protein sequence ID" value="CAF26173.1"/>
    <property type="molecule type" value="Genomic_DNA"/>
</dbReference>
<dbReference type="SMR" id="Q6FZN9"/>
<dbReference type="KEGG" id="bqu:BQ06840"/>
<dbReference type="eggNOG" id="COG0008">
    <property type="taxonomic scope" value="Bacteria"/>
</dbReference>
<dbReference type="HOGENOM" id="CLU_015768_6_3_5"/>
<dbReference type="OrthoDB" id="9807503at2"/>
<dbReference type="Proteomes" id="UP000000597">
    <property type="component" value="Chromosome"/>
</dbReference>
<dbReference type="GO" id="GO:0005829">
    <property type="term" value="C:cytosol"/>
    <property type="evidence" value="ECO:0007669"/>
    <property type="project" value="TreeGrafter"/>
</dbReference>
<dbReference type="GO" id="GO:0005524">
    <property type="term" value="F:ATP binding"/>
    <property type="evidence" value="ECO:0007669"/>
    <property type="project" value="UniProtKB-UniRule"/>
</dbReference>
<dbReference type="GO" id="GO:0004818">
    <property type="term" value="F:glutamate-tRNA ligase activity"/>
    <property type="evidence" value="ECO:0007669"/>
    <property type="project" value="UniProtKB-UniRule"/>
</dbReference>
<dbReference type="GO" id="GO:0000049">
    <property type="term" value="F:tRNA binding"/>
    <property type="evidence" value="ECO:0007669"/>
    <property type="project" value="InterPro"/>
</dbReference>
<dbReference type="GO" id="GO:0008270">
    <property type="term" value="F:zinc ion binding"/>
    <property type="evidence" value="ECO:0007669"/>
    <property type="project" value="InterPro"/>
</dbReference>
<dbReference type="GO" id="GO:0006424">
    <property type="term" value="P:glutamyl-tRNA aminoacylation"/>
    <property type="evidence" value="ECO:0007669"/>
    <property type="project" value="UniProtKB-UniRule"/>
</dbReference>
<dbReference type="CDD" id="cd00808">
    <property type="entry name" value="GluRS_core"/>
    <property type="match status" value="1"/>
</dbReference>
<dbReference type="FunFam" id="3.40.50.620:FF:000007">
    <property type="entry name" value="Glutamate--tRNA ligase"/>
    <property type="match status" value="1"/>
</dbReference>
<dbReference type="Gene3D" id="1.10.10.350">
    <property type="match status" value="1"/>
</dbReference>
<dbReference type="Gene3D" id="3.40.50.620">
    <property type="entry name" value="HUPs"/>
    <property type="match status" value="1"/>
</dbReference>
<dbReference type="HAMAP" id="MF_00022">
    <property type="entry name" value="Glu_tRNA_synth_type1"/>
    <property type="match status" value="1"/>
</dbReference>
<dbReference type="InterPro" id="IPR045462">
    <property type="entry name" value="aa-tRNA-synth_I_cd-bd"/>
</dbReference>
<dbReference type="InterPro" id="IPR020751">
    <property type="entry name" value="aa-tRNA-synth_I_codon-bd_sub2"/>
</dbReference>
<dbReference type="InterPro" id="IPR008925">
    <property type="entry name" value="aa_tRNA-synth_I_cd-bd_sf"/>
</dbReference>
<dbReference type="InterPro" id="IPR004527">
    <property type="entry name" value="Glu-tRNA-ligase_bac/mito"/>
</dbReference>
<dbReference type="InterPro" id="IPR000924">
    <property type="entry name" value="Glu/Gln-tRNA-synth"/>
</dbReference>
<dbReference type="InterPro" id="IPR020058">
    <property type="entry name" value="Glu/Gln-tRNA-synth_Ib_cat-dom"/>
</dbReference>
<dbReference type="InterPro" id="IPR049940">
    <property type="entry name" value="GluQ/Sye"/>
</dbReference>
<dbReference type="InterPro" id="IPR033910">
    <property type="entry name" value="GluRS_core"/>
</dbReference>
<dbReference type="InterPro" id="IPR014729">
    <property type="entry name" value="Rossmann-like_a/b/a_fold"/>
</dbReference>
<dbReference type="NCBIfam" id="TIGR00464">
    <property type="entry name" value="gltX_bact"/>
    <property type="match status" value="1"/>
</dbReference>
<dbReference type="PANTHER" id="PTHR43311">
    <property type="entry name" value="GLUTAMATE--TRNA LIGASE"/>
    <property type="match status" value="1"/>
</dbReference>
<dbReference type="PANTHER" id="PTHR43311:SF2">
    <property type="entry name" value="GLUTAMATE--TRNA LIGASE, MITOCHONDRIAL-RELATED"/>
    <property type="match status" value="1"/>
</dbReference>
<dbReference type="Pfam" id="PF19269">
    <property type="entry name" value="Anticodon_2"/>
    <property type="match status" value="1"/>
</dbReference>
<dbReference type="Pfam" id="PF00749">
    <property type="entry name" value="tRNA-synt_1c"/>
    <property type="match status" value="1"/>
</dbReference>
<dbReference type="PRINTS" id="PR00987">
    <property type="entry name" value="TRNASYNTHGLU"/>
</dbReference>
<dbReference type="SUPFAM" id="SSF48163">
    <property type="entry name" value="An anticodon-binding domain of class I aminoacyl-tRNA synthetases"/>
    <property type="match status" value="1"/>
</dbReference>
<dbReference type="SUPFAM" id="SSF52374">
    <property type="entry name" value="Nucleotidylyl transferase"/>
    <property type="match status" value="1"/>
</dbReference>
<proteinExistence type="inferred from homology"/>
<organism>
    <name type="scientific">Bartonella quintana (strain Toulouse)</name>
    <name type="common">Rochalimaea quintana</name>
    <dbReference type="NCBI Taxonomy" id="283165"/>
    <lineage>
        <taxon>Bacteria</taxon>
        <taxon>Pseudomonadati</taxon>
        <taxon>Pseudomonadota</taxon>
        <taxon>Alphaproteobacteria</taxon>
        <taxon>Hyphomicrobiales</taxon>
        <taxon>Bartonellaceae</taxon>
        <taxon>Bartonella</taxon>
    </lineage>
</organism>
<keyword id="KW-0030">Aminoacyl-tRNA synthetase</keyword>
<keyword id="KW-0067">ATP-binding</keyword>
<keyword id="KW-0963">Cytoplasm</keyword>
<keyword id="KW-0436">Ligase</keyword>
<keyword id="KW-0547">Nucleotide-binding</keyword>
<keyword id="KW-0648">Protein biosynthesis</keyword>
<protein>
    <recommendedName>
        <fullName evidence="1">Glutamate--tRNA ligase 2</fullName>
        <ecNumber evidence="1">6.1.1.17</ecNumber>
    </recommendedName>
    <alternativeName>
        <fullName evidence="1">Glutamyl-tRNA synthetase 2</fullName>
        <shortName evidence="1">GluRS 2</shortName>
    </alternativeName>
</protein>
<gene>
    <name evidence="1" type="primary">gltX2</name>
    <name type="ordered locus">BQ06840</name>
</gene>